<name>BM8D_BOMMX</name>
<keyword id="KW-1015">Disulfide bond</keyword>
<keyword id="KW-1213">G-protein coupled receptor impairing toxin</keyword>
<keyword id="KW-0964">Secreted</keyword>
<keyword id="KW-0732">Signal</keyword>
<keyword id="KW-0800">Toxin</keyword>
<comment type="function">
    <text evidence="1">Potent agonist for both PKR1/PROKR1 and PKR2/PROKR2, and inducer of a potent and long-lasting hyperalgesia. Also potentiates capsaicin-induced TRPV1 current, when tested on DRG neurons. At subnanomolar concentrations, this protein both induces potent chemotaxis of macrophages and stimulates LPS-induced production of the pro-inflammatory cytokines IL-1 and IL-12. In vivo, potently stimulates the contraction of the guinea-pig gastrointestinal (GI) smooth muscle (nanomolar concentration).</text>
</comment>
<comment type="subcellular location">
    <subcellularLocation>
        <location>Secreted</location>
    </subcellularLocation>
</comment>
<comment type="tissue specificity">
    <text>Expressed by the skin glands.</text>
</comment>
<comment type="similarity">
    <text evidence="2">Belongs to the AVIT (prokineticin) family.</text>
</comment>
<feature type="signal peptide" evidence="1">
    <location>
        <begin position="1"/>
        <end position="19"/>
    </location>
</feature>
<feature type="chain" id="PRO_0000265775" description="Prokineticin Bm8-d">
    <location>
        <begin position="20"/>
        <end position="96"/>
    </location>
</feature>
<feature type="disulfide bond" evidence="1">
    <location>
        <begin position="26"/>
        <end position="38"/>
    </location>
</feature>
<feature type="disulfide bond" evidence="1">
    <location>
        <begin position="32"/>
        <end position="50"/>
    </location>
</feature>
<feature type="disulfide bond" evidence="1">
    <location>
        <begin position="37"/>
        <end position="78"/>
    </location>
</feature>
<feature type="disulfide bond" evidence="1">
    <location>
        <begin position="60"/>
        <end position="86"/>
    </location>
</feature>
<feature type="disulfide bond" evidence="1">
    <location>
        <begin position="80"/>
        <end position="95"/>
    </location>
</feature>
<reference key="1">
    <citation type="journal article" date="2003" name="Biochem. J.">
        <title>Granular gland transcriptomes in stimulated amphibian skin secretions.</title>
        <authorList>
            <person name="Chen T."/>
            <person name="Farragher S.M."/>
            <person name="Bjourson A.J."/>
            <person name="Orr D.F."/>
            <person name="Rao P."/>
            <person name="Shaw C."/>
        </authorList>
    </citation>
    <scope>NUCLEOTIDE SEQUENCE [MRNA]</scope>
    <source>
        <tissue>Skin secretion</tissue>
    </source>
</reference>
<protein>
    <recommendedName>
        <fullName>Prokineticin Bm8-d</fullName>
    </recommendedName>
</protein>
<proteinExistence type="evidence at transcript level"/>
<accession>Q8JFY0</accession>
<evidence type="ECO:0000250" key="1">
    <source>
        <dbReference type="UniProtKB" id="Q9PW66"/>
    </source>
</evidence>
<evidence type="ECO:0000305" key="2"/>
<organism>
    <name type="scientific">Bombina maxima</name>
    <name type="common">Giant fire-bellied toad</name>
    <name type="synonym">Chinese red belly toad</name>
    <dbReference type="NCBI Taxonomy" id="161274"/>
    <lineage>
        <taxon>Eukaryota</taxon>
        <taxon>Metazoa</taxon>
        <taxon>Chordata</taxon>
        <taxon>Craniata</taxon>
        <taxon>Vertebrata</taxon>
        <taxon>Euteleostomi</taxon>
        <taxon>Amphibia</taxon>
        <taxon>Batrachia</taxon>
        <taxon>Anura</taxon>
        <taxon>Bombinatoridae</taxon>
        <taxon>Bombina</taxon>
    </lineage>
</organism>
<sequence length="96" mass="10057">MKCFAQIVVLLLVIAFSHGAVITGVCDRDAQCGSGTCCAASAFSRNIRFCVPLGNNGEECHPASHKVPYNGKRLSSLCPCNTGLTCSKSGEKSQCS</sequence>
<dbReference type="EMBL" id="AJ440233">
    <property type="protein sequence ID" value="CAD29343.1"/>
    <property type="molecule type" value="mRNA"/>
</dbReference>
<dbReference type="SMR" id="Q8JFY0"/>
<dbReference type="GO" id="GO:0005576">
    <property type="term" value="C:extracellular region"/>
    <property type="evidence" value="ECO:0007669"/>
    <property type="project" value="UniProtKB-SubCell"/>
</dbReference>
<dbReference type="GO" id="GO:0090729">
    <property type="term" value="F:toxin activity"/>
    <property type="evidence" value="ECO:0007669"/>
    <property type="project" value="UniProtKB-KW"/>
</dbReference>
<dbReference type="GO" id="GO:0001935">
    <property type="term" value="P:endothelial cell proliferation"/>
    <property type="evidence" value="ECO:0007669"/>
    <property type="project" value="TreeGrafter"/>
</dbReference>
<dbReference type="Gene3D" id="2.10.80.10">
    <property type="entry name" value="Lipase, subunit A"/>
    <property type="match status" value="1"/>
</dbReference>
<dbReference type="InterPro" id="IPR009523">
    <property type="entry name" value="Prokineticin"/>
</dbReference>
<dbReference type="InterPro" id="IPR023569">
    <property type="entry name" value="Prokineticin_domain"/>
</dbReference>
<dbReference type="PANTHER" id="PTHR18821:SF2">
    <property type="entry name" value="DICKKOPF-RELATED PROTEIN 3-LIKE"/>
    <property type="match status" value="1"/>
</dbReference>
<dbReference type="PANTHER" id="PTHR18821">
    <property type="entry name" value="PROKINETICIN"/>
    <property type="match status" value="1"/>
</dbReference>
<dbReference type="Pfam" id="PF06607">
    <property type="entry name" value="Prokineticin"/>
    <property type="match status" value="1"/>
</dbReference>
<dbReference type="SUPFAM" id="SSF57190">
    <property type="entry name" value="Colipase-like"/>
    <property type="match status" value="2"/>
</dbReference>